<protein>
    <recommendedName>
        <fullName evidence="1">Phosphonoacetaldehyde hydrolase</fullName>
        <shortName evidence="1">Phosphonatase</shortName>
        <ecNumber evidence="1">3.11.1.1</ecNumber>
    </recommendedName>
    <alternativeName>
        <fullName evidence="1">Phosphonoacetaldehyde phosphonohydrolase</fullName>
    </alternativeName>
</protein>
<feature type="chain" id="PRO_1000068240" description="Phosphonoacetaldehyde hydrolase">
    <location>
        <begin position="1"/>
        <end position="275"/>
    </location>
</feature>
<feature type="active site" description="Nucleophile" evidence="1">
    <location>
        <position position="15"/>
    </location>
</feature>
<feature type="active site" description="Schiff-base intermediate with substrate" evidence="1">
    <location>
        <position position="56"/>
    </location>
</feature>
<feature type="binding site" evidence="1">
    <location>
        <position position="15"/>
    </location>
    <ligand>
        <name>Mg(2+)</name>
        <dbReference type="ChEBI" id="CHEBI:18420"/>
    </ligand>
</feature>
<feature type="binding site" evidence="1">
    <location>
        <position position="17"/>
    </location>
    <ligand>
        <name>Mg(2+)</name>
        <dbReference type="ChEBI" id="CHEBI:18420"/>
    </ligand>
</feature>
<feature type="binding site" evidence="1">
    <location>
        <position position="189"/>
    </location>
    <ligand>
        <name>Mg(2+)</name>
        <dbReference type="ChEBI" id="CHEBI:18420"/>
    </ligand>
</feature>
<sequence length="275" mass="30051">MNYNNPTQLQAAILDWAGTVVDFGSFAPTQIFVEAFAEFDVQVSIEEARGPMGMGKWDHIRTLCDVPEIAERYRKVFGRTPTDDDVTAIYNRFMPLQIEKIAVHSALIPGALDTLTGLRQDGLKIGSCSGYPKVVMDKVVELAAQNGYVADHVVATDETPNGRPWPAQALANVIALGIDDVAACVKVDDTVPGILEGRRAGMWTVALVCSGNALGLTWEGFRALSAEKLESERQRIHALFAGSRPHYLIDTINDLPEVIADINRRLAKGEMPQAF</sequence>
<organism>
    <name type="scientific">Pseudomonas putida (strain ATCC 700007 / DSM 6899 / JCM 31910 / BCRC 17059 / LMG 24140 / F1)</name>
    <dbReference type="NCBI Taxonomy" id="351746"/>
    <lineage>
        <taxon>Bacteria</taxon>
        <taxon>Pseudomonadati</taxon>
        <taxon>Pseudomonadota</taxon>
        <taxon>Gammaproteobacteria</taxon>
        <taxon>Pseudomonadales</taxon>
        <taxon>Pseudomonadaceae</taxon>
        <taxon>Pseudomonas</taxon>
    </lineage>
</organism>
<name>PHNX_PSEP1</name>
<dbReference type="EC" id="3.11.1.1" evidence="1"/>
<dbReference type="EMBL" id="CP000712">
    <property type="protein sequence ID" value="ABQ79656.1"/>
    <property type="molecule type" value="Genomic_DNA"/>
</dbReference>
<dbReference type="SMR" id="A5W696"/>
<dbReference type="KEGG" id="ppf:Pput_3530"/>
<dbReference type="eggNOG" id="COG0637">
    <property type="taxonomic scope" value="Bacteria"/>
</dbReference>
<dbReference type="HOGENOM" id="CLU_045011_12_0_6"/>
<dbReference type="GO" id="GO:0005829">
    <property type="term" value="C:cytosol"/>
    <property type="evidence" value="ECO:0007669"/>
    <property type="project" value="TreeGrafter"/>
</dbReference>
<dbReference type="GO" id="GO:0000287">
    <property type="term" value="F:magnesium ion binding"/>
    <property type="evidence" value="ECO:0007669"/>
    <property type="project" value="UniProtKB-UniRule"/>
</dbReference>
<dbReference type="GO" id="GO:0008967">
    <property type="term" value="F:phosphoglycolate phosphatase activity"/>
    <property type="evidence" value="ECO:0007669"/>
    <property type="project" value="TreeGrafter"/>
</dbReference>
<dbReference type="GO" id="GO:0050194">
    <property type="term" value="F:phosphonoacetaldehyde hydrolase activity"/>
    <property type="evidence" value="ECO:0007669"/>
    <property type="project" value="UniProtKB-UniRule"/>
</dbReference>
<dbReference type="GO" id="GO:0006281">
    <property type="term" value="P:DNA repair"/>
    <property type="evidence" value="ECO:0007669"/>
    <property type="project" value="TreeGrafter"/>
</dbReference>
<dbReference type="GO" id="GO:0019700">
    <property type="term" value="P:organic phosphonate catabolic process"/>
    <property type="evidence" value="ECO:0007669"/>
    <property type="project" value="InterPro"/>
</dbReference>
<dbReference type="CDD" id="cd02586">
    <property type="entry name" value="HAD_PHN"/>
    <property type="match status" value="1"/>
</dbReference>
<dbReference type="FunFam" id="1.10.150.240:FF:000006">
    <property type="entry name" value="Phosphonoacetaldehyde hydrolase"/>
    <property type="match status" value="1"/>
</dbReference>
<dbReference type="Gene3D" id="3.40.50.1000">
    <property type="entry name" value="HAD superfamily/HAD-like"/>
    <property type="match status" value="1"/>
</dbReference>
<dbReference type="Gene3D" id="1.10.150.240">
    <property type="entry name" value="Putative phosphatase, domain 2"/>
    <property type="match status" value="1"/>
</dbReference>
<dbReference type="HAMAP" id="MF_01375">
    <property type="entry name" value="PhnX"/>
    <property type="match status" value="1"/>
</dbReference>
<dbReference type="InterPro" id="IPR050155">
    <property type="entry name" value="HAD-like_hydrolase_sf"/>
</dbReference>
<dbReference type="InterPro" id="IPR036412">
    <property type="entry name" value="HAD-like_sf"/>
</dbReference>
<dbReference type="InterPro" id="IPR006439">
    <property type="entry name" value="HAD-SF_hydro_IA"/>
</dbReference>
<dbReference type="InterPro" id="IPR023214">
    <property type="entry name" value="HAD_sf"/>
</dbReference>
<dbReference type="InterPro" id="IPR023198">
    <property type="entry name" value="PGP-like_dom2"/>
</dbReference>
<dbReference type="InterPro" id="IPR006323">
    <property type="entry name" value="Phosphonoacetald_hydro"/>
</dbReference>
<dbReference type="NCBIfam" id="TIGR01509">
    <property type="entry name" value="HAD-SF-IA-v3"/>
    <property type="match status" value="1"/>
</dbReference>
<dbReference type="NCBIfam" id="TIGR01422">
    <property type="entry name" value="phosphonatase"/>
    <property type="match status" value="1"/>
</dbReference>
<dbReference type="PANTHER" id="PTHR43434">
    <property type="entry name" value="PHOSPHOGLYCOLATE PHOSPHATASE"/>
    <property type="match status" value="1"/>
</dbReference>
<dbReference type="PANTHER" id="PTHR43434:SF19">
    <property type="entry name" value="PHOSPHONOACETALDEHYDE HYDROLASE"/>
    <property type="match status" value="1"/>
</dbReference>
<dbReference type="Pfam" id="PF00702">
    <property type="entry name" value="Hydrolase"/>
    <property type="match status" value="1"/>
</dbReference>
<dbReference type="SFLD" id="SFLDS00003">
    <property type="entry name" value="Haloacid_Dehalogenase"/>
    <property type="match status" value="1"/>
</dbReference>
<dbReference type="SFLD" id="SFLDF00038">
    <property type="entry name" value="phosphonoacetaldehyde_hydrolas"/>
    <property type="match status" value="1"/>
</dbReference>
<dbReference type="SUPFAM" id="SSF56784">
    <property type="entry name" value="HAD-like"/>
    <property type="match status" value="1"/>
</dbReference>
<accession>A5W696</accession>
<keyword id="KW-0378">Hydrolase</keyword>
<keyword id="KW-0460">Magnesium</keyword>
<keyword id="KW-0479">Metal-binding</keyword>
<keyword id="KW-0704">Schiff base</keyword>
<reference key="1">
    <citation type="submission" date="2007-05" db="EMBL/GenBank/DDBJ databases">
        <title>Complete sequence of Pseudomonas putida F1.</title>
        <authorList>
            <consortium name="US DOE Joint Genome Institute"/>
            <person name="Copeland A."/>
            <person name="Lucas S."/>
            <person name="Lapidus A."/>
            <person name="Barry K."/>
            <person name="Detter J.C."/>
            <person name="Glavina del Rio T."/>
            <person name="Hammon N."/>
            <person name="Israni S."/>
            <person name="Dalin E."/>
            <person name="Tice H."/>
            <person name="Pitluck S."/>
            <person name="Chain P."/>
            <person name="Malfatti S."/>
            <person name="Shin M."/>
            <person name="Vergez L."/>
            <person name="Schmutz J."/>
            <person name="Larimer F."/>
            <person name="Land M."/>
            <person name="Hauser L."/>
            <person name="Kyrpides N."/>
            <person name="Lykidis A."/>
            <person name="Parales R."/>
            <person name="Richardson P."/>
        </authorList>
    </citation>
    <scope>NUCLEOTIDE SEQUENCE [LARGE SCALE GENOMIC DNA]</scope>
    <source>
        <strain>ATCC 700007 / DSM 6899 / JCM 31910 / BCRC 17059 / LMG 24140 / F1</strain>
    </source>
</reference>
<evidence type="ECO:0000255" key="1">
    <source>
        <dbReference type="HAMAP-Rule" id="MF_01375"/>
    </source>
</evidence>
<gene>
    <name evidence="1" type="primary">phnX</name>
    <name type="ordered locus">Pput_3530</name>
</gene>
<comment type="function">
    <text evidence="1">Involved in phosphonate degradation.</text>
</comment>
<comment type="catalytic activity">
    <reaction evidence="1">
        <text>phosphonoacetaldehyde + H2O = acetaldehyde + phosphate + H(+)</text>
        <dbReference type="Rhea" id="RHEA:18905"/>
        <dbReference type="ChEBI" id="CHEBI:15343"/>
        <dbReference type="ChEBI" id="CHEBI:15377"/>
        <dbReference type="ChEBI" id="CHEBI:15378"/>
        <dbReference type="ChEBI" id="CHEBI:43474"/>
        <dbReference type="ChEBI" id="CHEBI:58383"/>
        <dbReference type="EC" id="3.11.1.1"/>
    </reaction>
</comment>
<comment type="cofactor">
    <cofactor evidence="1">
        <name>Mg(2+)</name>
        <dbReference type="ChEBI" id="CHEBI:18420"/>
    </cofactor>
    <text evidence="1">Binds 1 Mg(2+) ion per subunit.</text>
</comment>
<comment type="subunit">
    <text evidence="1">Homodimer.</text>
</comment>
<comment type="similarity">
    <text evidence="1">Belongs to the HAD-like hydrolase superfamily. PhnX family.</text>
</comment>
<proteinExistence type="inferred from homology"/>